<evidence type="ECO:0000255" key="1">
    <source>
        <dbReference type="HAMAP-Rule" id="MF_00379"/>
    </source>
</evidence>
<accession>B1YGA8</accession>
<name>MNME_EXIS2</name>
<dbReference type="EC" id="3.6.-.-" evidence="1"/>
<dbReference type="EMBL" id="CP001022">
    <property type="protein sequence ID" value="ACB62492.1"/>
    <property type="molecule type" value="Genomic_DNA"/>
</dbReference>
<dbReference type="RefSeq" id="WP_012371907.1">
    <property type="nucleotide sequence ID" value="NC_010556.1"/>
</dbReference>
<dbReference type="SMR" id="B1YGA8"/>
<dbReference type="STRING" id="262543.Exig_3047"/>
<dbReference type="KEGG" id="esi:Exig_3047"/>
<dbReference type="eggNOG" id="COG0486">
    <property type="taxonomic scope" value="Bacteria"/>
</dbReference>
<dbReference type="HOGENOM" id="CLU_019624_4_1_9"/>
<dbReference type="OrthoDB" id="9805918at2"/>
<dbReference type="Proteomes" id="UP000001681">
    <property type="component" value="Chromosome"/>
</dbReference>
<dbReference type="GO" id="GO:0005829">
    <property type="term" value="C:cytosol"/>
    <property type="evidence" value="ECO:0007669"/>
    <property type="project" value="TreeGrafter"/>
</dbReference>
<dbReference type="GO" id="GO:0005525">
    <property type="term" value="F:GTP binding"/>
    <property type="evidence" value="ECO:0007669"/>
    <property type="project" value="UniProtKB-UniRule"/>
</dbReference>
<dbReference type="GO" id="GO:0003924">
    <property type="term" value="F:GTPase activity"/>
    <property type="evidence" value="ECO:0007669"/>
    <property type="project" value="UniProtKB-UniRule"/>
</dbReference>
<dbReference type="GO" id="GO:0046872">
    <property type="term" value="F:metal ion binding"/>
    <property type="evidence" value="ECO:0007669"/>
    <property type="project" value="UniProtKB-KW"/>
</dbReference>
<dbReference type="GO" id="GO:0030488">
    <property type="term" value="P:tRNA methylation"/>
    <property type="evidence" value="ECO:0007669"/>
    <property type="project" value="TreeGrafter"/>
</dbReference>
<dbReference type="GO" id="GO:0002098">
    <property type="term" value="P:tRNA wobble uridine modification"/>
    <property type="evidence" value="ECO:0007669"/>
    <property type="project" value="TreeGrafter"/>
</dbReference>
<dbReference type="CDD" id="cd04164">
    <property type="entry name" value="trmE"/>
    <property type="match status" value="1"/>
</dbReference>
<dbReference type="CDD" id="cd14858">
    <property type="entry name" value="TrmE_N"/>
    <property type="match status" value="1"/>
</dbReference>
<dbReference type="FunFam" id="3.30.1360.120:FF:000003">
    <property type="entry name" value="tRNA modification GTPase MnmE"/>
    <property type="match status" value="1"/>
</dbReference>
<dbReference type="FunFam" id="3.40.50.300:FF:000494">
    <property type="entry name" value="tRNA modification GTPase MnmE"/>
    <property type="match status" value="1"/>
</dbReference>
<dbReference type="Gene3D" id="3.40.50.300">
    <property type="entry name" value="P-loop containing nucleotide triphosphate hydrolases"/>
    <property type="match status" value="1"/>
</dbReference>
<dbReference type="Gene3D" id="3.30.1360.120">
    <property type="entry name" value="Probable tRNA modification gtpase trme, domain 1"/>
    <property type="match status" value="1"/>
</dbReference>
<dbReference type="Gene3D" id="1.20.120.430">
    <property type="entry name" value="tRNA modification GTPase MnmE domain 2"/>
    <property type="match status" value="1"/>
</dbReference>
<dbReference type="HAMAP" id="MF_00379">
    <property type="entry name" value="GTPase_MnmE"/>
    <property type="match status" value="1"/>
</dbReference>
<dbReference type="InterPro" id="IPR031168">
    <property type="entry name" value="G_TrmE"/>
</dbReference>
<dbReference type="InterPro" id="IPR006073">
    <property type="entry name" value="GTP-bd"/>
</dbReference>
<dbReference type="InterPro" id="IPR018948">
    <property type="entry name" value="GTP-bd_TrmE_N"/>
</dbReference>
<dbReference type="InterPro" id="IPR004520">
    <property type="entry name" value="GTPase_MnmE"/>
</dbReference>
<dbReference type="InterPro" id="IPR027368">
    <property type="entry name" value="MnmE_dom2"/>
</dbReference>
<dbReference type="InterPro" id="IPR025867">
    <property type="entry name" value="MnmE_helical"/>
</dbReference>
<dbReference type="InterPro" id="IPR027417">
    <property type="entry name" value="P-loop_NTPase"/>
</dbReference>
<dbReference type="InterPro" id="IPR005225">
    <property type="entry name" value="Small_GTP-bd"/>
</dbReference>
<dbReference type="InterPro" id="IPR027266">
    <property type="entry name" value="TrmE/GcvT_dom1"/>
</dbReference>
<dbReference type="NCBIfam" id="TIGR00450">
    <property type="entry name" value="mnmE_trmE_thdF"/>
    <property type="match status" value="1"/>
</dbReference>
<dbReference type="NCBIfam" id="NF003661">
    <property type="entry name" value="PRK05291.1-3"/>
    <property type="match status" value="1"/>
</dbReference>
<dbReference type="NCBIfam" id="TIGR00231">
    <property type="entry name" value="small_GTP"/>
    <property type="match status" value="1"/>
</dbReference>
<dbReference type="PANTHER" id="PTHR42714">
    <property type="entry name" value="TRNA MODIFICATION GTPASE GTPBP3"/>
    <property type="match status" value="1"/>
</dbReference>
<dbReference type="PANTHER" id="PTHR42714:SF2">
    <property type="entry name" value="TRNA MODIFICATION GTPASE GTPBP3, MITOCHONDRIAL"/>
    <property type="match status" value="1"/>
</dbReference>
<dbReference type="Pfam" id="PF01926">
    <property type="entry name" value="MMR_HSR1"/>
    <property type="match status" value="1"/>
</dbReference>
<dbReference type="Pfam" id="PF12631">
    <property type="entry name" value="MnmE_helical"/>
    <property type="match status" value="1"/>
</dbReference>
<dbReference type="Pfam" id="PF10396">
    <property type="entry name" value="TrmE_N"/>
    <property type="match status" value="1"/>
</dbReference>
<dbReference type="SUPFAM" id="SSF52540">
    <property type="entry name" value="P-loop containing nucleoside triphosphate hydrolases"/>
    <property type="match status" value="1"/>
</dbReference>
<dbReference type="SUPFAM" id="SSF116878">
    <property type="entry name" value="TrmE connector domain"/>
    <property type="match status" value="1"/>
</dbReference>
<dbReference type="PROSITE" id="PS51709">
    <property type="entry name" value="G_TRME"/>
    <property type="match status" value="1"/>
</dbReference>
<comment type="function">
    <text evidence="1">Exhibits a very high intrinsic GTPase hydrolysis rate. Involved in the addition of a carboxymethylaminomethyl (cmnm) group at the wobble position (U34) of certain tRNAs, forming tRNA-cmnm(5)s(2)U34.</text>
</comment>
<comment type="cofactor">
    <cofactor evidence="1">
        <name>K(+)</name>
        <dbReference type="ChEBI" id="CHEBI:29103"/>
    </cofactor>
    <text evidence="1">Binds 1 potassium ion per subunit.</text>
</comment>
<comment type="subunit">
    <text evidence="1">Homodimer. Heterotetramer of two MnmE and two MnmG subunits.</text>
</comment>
<comment type="subcellular location">
    <subcellularLocation>
        <location evidence="1">Cytoplasm</location>
    </subcellularLocation>
</comment>
<comment type="similarity">
    <text evidence="1">Belongs to the TRAFAC class TrmE-Era-EngA-EngB-Septin-like GTPase superfamily. TrmE GTPase family.</text>
</comment>
<sequence length="460" mass="50425">MMEFDTIAAISTPMGEGAIAIVRLSGPKAVETADRVYRGANRLTDVPTHTIHYGKLVEQTTEQVVDEVMVSVMRAPKTFTREDVVELNCHGGIVAVNRVLELILEQPDVRLAEPGEFTKRAFLNGRIDLSQAEAVMDLIRAKTDRAMTVAVGQIEGRLSKLVQDLREQLLQTIASIEVNIDYPEYDAEEMTQQIVQKDAGEVRRILTELLATARQGKILREGLSTAIIGRPNVGKSSLLNTLVQEAKAIVTDIAGTTRDTIEEYVNVRGVPLKLIDTAGIRETEDIVERMGVEKSRQALNSADLILLVLNGNDALTEEDVLLFEAIRGMNAIIIVNKSDLTQAIDLTRVSELADGRPVVTTSLLEEAGVTDLEAAIASLFFEQGVEGQDMTYVSNARHIQLIKQASQMIEDALGAAEASMPIDMVQIDLRRAWDTLGEINGDTAQDSLLDKLFSQFCLGK</sequence>
<organism>
    <name type="scientific">Exiguobacterium sibiricum (strain DSM 17290 / CCUG 55495 / CIP 109462 / JCM 13490 / 255-15)</name>
    <dbReference type="NCBI Taxonomy" id="262543"/>
    <lineage>
        <taxon>Bacteria</taxon>
        <taxon>Bacillati</taxon>
        <taxon>Bacillota</taxon>
        <taxon>Bacilli</taxon>
        <taxon>Bacillales</taxon>
        <taxon>Bacillales Family XII. Incertae Sedis</taxon>
        <taxon>Exiguobacterium</taxon>
    </lineage>
</organism>
<keyword id="KW-0963">Cytoplasm</keyword>
<keyword id="KW-0342">GTP-binding</keyword>
<keyword id="KW-0378">Hydrolase</keyword>
<keyword id="KW-0460">Magnesium</keyword>
<keyword id="KW-0479">Metal-binding</keyword>
<keyword id="KW-0547">Nucleotide-binding</keyword>
<keyword id="KW-0630">Potassium</keyword>
<keyword id="KW-1185">Reference proteome</keyword>
<keyword id="KW-0819">tRNA processing</keyword>
<reference key="1">
    <citation type="submission" date="2008-04" db="EMBL/GenBank/DDBJ databases">
        <title>Complete sequence of chromosome of Exiguobacterium sibiricum 255-15.</title>
        <authorList>
            <consortium name="US DOE Joint Genome Institute"/>
            <person name="Copeland A."/>
            <person name="Lucas S."/>
            <person name="Lapidus A."/>
            <person name="Glavina del Rio T."/>
            <person name="Dalin E."/>
            <person name="Tice H."/>
            <person name="Bruce D."/>
            <person name="Goodwin L."/>
            <person name="Pitluck S."/>
            <person name="Kiss H."/>
            <person name="Chertkov O."/>
            <person name="Monk C."/>
            <person name="Brettin T."/>
            <person name="Detter J.C."/>
            <person name="Han C."/>
            <person name="Kuske C.R."/>
            <person name="Schmutz J."/>
            <person name="Larimer F."/>
            <person name="Land M."/>
            <person name="Hauser L."/>
            <person name="Kyrpides N."/>
            <person name="Mikhailova N."/>
            <person name="Vishnivetskaya T."/>
            <person name="Rodrigues D.F."/>
            <person name="Gilichinsky D."/>
            <person name="Tiedje J."/>
            <person name="Richardson P."/>
        </authorList>
    </citation>
    <scope>NUCLEOTIDE SEQUENCE [LARGE SCALE GENOMIC DNA]</scope>
    <source>
        <strain>DSM 17290 / CCUG 55495 / CIP 109462 / JCM 13490 / 255-15</strain>
    </source>
</reference>
<protein>
    <recommendedName>
        <fullName evidence="1">tRNA modification GTPase MnmE</fullName>
        <ecNumber evidence="1">3.6.-.-</ecNumber>
    </recommendedName>
</protein>
<gene>
    <name evidence="1" type="primary">mnmE</name>
    <name evidence="1" type="synonym">trmE</name>
    <name type="ordered locus">Exig_3047</name>
</gene>
<proteinExistence type="inferred from homology"/>
<feature type="chain" id="PRO_0000345784" description="tRNA modification GTPase MnmE">
    <location>
        <begin position="1"/>
        <end position="460"/>
    </location>
</feature>
<feature type="domain" description="TrmE-type G">
    <location>
        <begin position="222"/>
        <end position="381"/>
    </location>
</feature>
<feature type="binding site" evidence="1">
    <location>
        <position position="23"/>
    </location>
    <ligand>
        <name>(6S)-5-formyl-5,6,7,8-tetrahydrofolate</name>
        <dbReference type="ChEBI" id="CHEBI:57457"/>
    </ligand>
</feature>
<feature type="binding site" evidence="1">
    <location>
        <position position="86"/>
    </location>
    <ligand>
        <name>(6S)-5-formyl-5,6,7,8-tetrahydrofolate</name>
        <dbReference type="ChEBI" id="CHEBI:57457"/>
    </ligand>
</feature>
<feature type="binding site" evidence="1">
    <location>
        <position position="126"/>
    </location>
    <ligand>
        <name>(6S)-5-formyl-5,6,7,8-tetrahydrofolate</name>
        <dbReference type="ChEBI" id="CHEBI:57457"/>
    </ligand>
</feature>
<feature type="binding site" evidence="1">
    <location>
        <begin position="232"/>
        <end position="237"/>
    </location>
    <ligand>
        <name>GTP</name>
        <dbReference type="ChEBI" id="CHEBI:37565"/>
    </ligand>
</feature>
<feature type="binding site" evidence="1">
    <location>
        <position position="232"/>
    </location>
    <ligand>
        <name>K(+)</name>
        <dbReference type="ChEBI" id="CHEBI:29103"/>
    </ligand>
</feature>
<feature type="binding site" evidence="1">
    <location>
        <position position="236"/>
    </location>
    <ligand>
        <name>Mg(2+)</name>
        <dbReference type="ChEBI" id="CHEBI:18420"/>
    </ligand>
</feature>
<feature type="binding site" evidence="1">
    <location>
        <begin position="251"/>
        <end position="257"/>
    </location>
    <ligand>
        <name>GTP</name>
        <dbReference type="ChEBI" id="CHEBI:37565"/>
    </ligand>
</feature>
<feature type="binding site" evidence="1">
    <location>
        <position position="251"/>
    </location>
    <ligand>
        <name>K(+)</name>
        <dbReference type="ChEBI" id="CHEBI:29103"/>
    </ligand>
</feature>
<feature type="binding site" evidence="1">
    <location>
        <position position="253"/>
    </location>
    <ligand>
        <name>K(+)</name>
        <dbReference type="ChEBI" id="CHEBI:29103"/>
    </ligand>
</feature>
<feature type="binding site" evidence="1">
    <location>
        <position position="256"/>
    </location>
    <ligand>
        <name>K(+)</name>
        <dbReference type="ChEBI" id="CHEBI:29103"/>
    </ligand>
</feature>
<feature type="binding site" evidence="1">
    <location>
        <position position="257"/>
    </location>
    <ligand>
        <name>Mg(2+)</name>
        <dbReference type="ChEBI" id="CHEBI:18420"/>
    </ligand>
</feature>
<feature type="binding site" evidence="1">
    <location>
        <begin position="276"/>
        <end position="279"/>
    </location>
    <ligand>
        <name>GTP</name>
        <dbReference type="ChEBI" id="CHEBI:37565"/>
    </ligand>
</feature>
<feature type="binding site" evidence="1">
    <location>
        <position position="460"/>
    </location>
    <ligand>
        <name>(6S)-5-formyl-5,6,7,8-tetrahydrofolate</name>
        <dbReference type="ChEBI" id="CHEBI:57457"/>
    </ligand>
</feature>